<gene>
    <name type="primary">yvaP</name>
    <name type="ordered locus">BSU33680</name>
</gene>
<accession>O32238</accession>
<organism>
    <name type="scientific">Bacillus subtilis (strain 168)</name>
    <dbReference type="NCBI Taxonomy" id="224308"/>
    <lineage>
        <taxon>Bacteria</taxon>
        <taxon>Bacillati</taxon>
        <taxon>Bacillota</taxon>
        <taxon>Bacilli</taxon>
        <taxon>Bacillales</taxon>
        <taxon>Bacillaceae</taxon>
        <taxon>Bacillus</taxon>
    </lineage>
</organism>
<proteinExistence type="predicted"/>
<dbReference type="EMBL" id="AL009126">
    <property type="protein sequence ID" value="CAB15373.2"/>
    <property type="molecule type" value="Genomic_DNA"/>
</dbReference>
<dbReference type="SMR" id="O32238"/>
<dbReference type="FunCoup" id="O32238">
    <property type="interactions" value="15"/>
</dbReference>
<dbReference type="STRING" id="224308.BSU33680"/>
<dbReference type="PaxDb" id="224308-BSU33680"/>
<dbReference type="EnsemblBacteria" id="CAB15373">
    <property type="protein sequence ID" value="CAB15373"/>
    <property type="gene ID" value="BSU_33680"/>
</dbReference>
<dbReference type="GeneID" id="938478"/>
<dbReference type="KEGG" id="bsu:BSU33680"/>
<dbReference type="PATRIC" id="fig|224308.179.peg.3653"/>
<dbReference type="eggNOG" id="COG1733">
    <property type="taxonomic scope" value="Bacteria"/>
</dbReference>
<dbReference type="InParanoid" id="O32238"/>
<dbReference type="OrthoDB" id="9800966at2"/>
<dbReference type="PhylomeDB" id="O32238"/>
<dbReference type="BioCyc" id="BSUB:BSU33680-MONOMER"/>
<dbReference type="Proteomes" id="UP000001570">
    <property type="component" value="Chromosome"/>
</dbReference>
<dbReference type="CollecTF" id="EXPREG_00000680"/>
<dbReference type="GO" id="GO:0032993">
    <property type="term" value="C:protein-DNA complex"/>
    <property type="evidence" value="ECO:0000315"/>
    <property type="project" value="CollecTF"/>
</dbReference>
<dbReference type="GO" id="GO:0003700">
    <property type="term" value="F:DNA-binding transcription factor activity"/>
    <property type="evidence" value="ECO:0000318"/>
    <property type="project" value="GO_Central"/>
</dbReference>
<dbReference type="GO" id="GO:0001217">
    <property type="term" value="F:DNA-binding transcription repressor activity"/>
    <property type="evidence" value="ECO:0000315"/>
    <property type="project" value="CollecTF"/>
</dbReference>
<dbReference type="GO" id="GO:0000976">
    <property type="term" value="F:transcription cis-regulatory region binding"/>
    <property type="evidence" value="ECO:0000315"/>
    <property type="project" value="CollecTF"/>
</dbReference>
<dbReference type="GO" id="GO:0045892">
    <property type="term" value="P:negative regulation of DNA-templated transcription"/>
    <property type="evidence" value="ECO:0000270"/>
    <property type="project" value="CollecTF"/>
</dbReference>
<dbReference type="GO" id="GO:0006355">
    <property type="term" value="P:regulation of DNA-templated transcription"/>
    <property type="evidence" value="ECO:0000318"/>
    <property type="project" value="GO_Central"/>
</dbReference>
<dbReference type="Gene3D" id="1.10.10.10">
    <property type="entry name" value="Winged helix-like DNA-binding domain superfamily/Winged helix DNA-binding domain"/>
    <property type="match status" value="1"/>
</dbReference>
<dbReference type="InterPro" id="IPR002577">
    <property type="entry name" value="HTH_HxlR"/>
</dbReference>
<dbReference type="InterPro" id="IPR036388">
    <property type="entry name" value="WH-like_DNA-bd_sf"/>
</dbReference>
<dbReference type="InterPro" id="IPR036390">
    <property type="entry name" value="WH_DNA-bd_sf"/>
</dbReference>
<dbReference type="PANTHER" id="PTHR33204">
    <property type="entry name" value="TRANSCRIPTIONAL REGULATOR, MARR FAMILY"/>
    <property type="match status" value="1"/>
</dbReference>
<dbReference type="PANTHER" id="PTHR33204:SF1">
    <property type="entry name" value="TRANSCRIPTIONAL REGULATOR, MARR FAMILY"/>
    <property type="match status" value="1"/>
</dbReference>
<dbReference type="Pfam" id="PF01638">
    <property type="entry name" value="HxlR"/>
    <property type="match status" value="1"/>
</dbReference>
<dbReference type="SUPFAM" id="SSF46785">
    <property type="entry name" value="Winged helix' DNA-binding domain"/>
    <property type="match status" value="1"/>
</dbReference>
<dbReference type="PROSITE" id="PS51118">
    <property type="entry name" value="HTH_HXLR"/>
    <property type="match status" value="1"/>
</dbReference>
<name>YVAP_BACSU</name>
<keyword id="KW-0238">DNA-binding</keyword>
<keyword id="KW-1185">Reference proteome</keyword>
<keyword id="KW-0804">Transcription</keyword>
<keyword id="KW-0805">Transcription regulation</keyword>
<evidence type="ECO:0000255" key="1">
    <source>
        <dbReference type="PROSITE-ProRule" id="PRU00435"/>
    </source>
</evidence>
<reference key="1">
    <citation type="journal article" date="1997" name="Nature">
        <title>The complete genome sequence of the Gram-positive bacterium Bacillus subtilis.</title>
        <authorList>
            <person name="Kunst F."/>
            <person name="Ogasawara N."/>
            <person name="Moszer I."/>
            <person name="Albertini A.M."/>
            <person name="Alloni G."/>
            <person name="Azevedo V."/>
            <person name="Bertero M.G."/>
            <person name="Bessieres P."/>
            <person name="Bolotin A."/>
            <person name="Borchert S."/>
            <person name="Borriss R."/>
            <person name="Boursier L."/>
            <person name="Brans A."/>
            <person name="Braun M."/>
            <person name="Brignell S.C."/>
            <person name="Bron S."/>
            <person name="Brouillet S."/>
            <person name="Bruschi C.V."/>
            <person name="Caldwell B."/>
            <person name="Capuano V."/>
            <person name="Carter N.M."/>
            <person name="Choi S.-K."/>
            <person name="Codani J.-J."/>
            <person name="Connerton I.F."/>
            <person name="Cummings N.J."/>
            <person name="Daniel R.A."/>
            <person name="Denizot F."/>
            <person name="Devine K.M."/>
            <person name="Duesterhoeft A."/>
            <person name="Ehrlich S.D."/>
            <person name="Emmerson P.T."/>
            <person name="Entian K.-D."/>
            <person name="Errington J."/>
            <person name="Fabret C."/>
            <person name="Ferrari E."/>
            <person name="Foulger D."/>
            <person name="Fritz C."/>
            <person name="Fujita M."/>
            <person name="Fujita Y."/>
            <person name="Fuma S."/>
            <person name="Galizzi A."/>
            <person name="Galleron N."/>
            <person name="Ghim S.-Y."/>
            <person name="Glaser P."/>
            <person name="Goffeau A."/>
            <person name="Golightly E.J."/>
            <person name="Grandi G."/>
            <person name="Guiseppi G."/>
            <person name="Guy B.J."/>
            <person name="Haga K."/>
            <person name="Haiech J."/>
            <person name="Harwood C.R."/>
            <person name="Henaut A."/>
            <person name="Hilbert H."/>
            <person name="Holsappel S."/>
            <person name="Hosono S."/>
            <person name="Hullo M.-F."/>
            <person name="Itaya M."/>
            <person name="Jones L.-M."/>
            <person name="Joris B."/>
            <person name="Karamata D."/>
            <person name="Kasahara Y."/>
            <person name="Klaerr-Blanchard M."/>
            <person name="Klein C."/>
            <person name="Kobayashi Y."/>
            <person name="Koetter P."/>
            <person name="Koningstein G."/>
            <person name="Krogh S."/>
            <person name="Kumano M."/>
            <person name="Kurita K."/>
            <person name="Lapidus A."/>
            <person name="Lardinois S."/>
            <person name="Lauber J."/>
            <person name="Lazarevic V."/>
            <person name="Lee S.-M."/>
            <person name="Levine A."/>
            <person name="Liu H."/>
            <person name="Masuda S."/>
            <person name="Mauel C."/>
            <person name="Medigue C."/>
            <person name="Medina N."/>
            <person name="Mellado R.P."/>
            <person name="Mizuno M."/>
            <person name="Moestl D."/>
            <person name="Nakai S."/>
            <person name="Noback M."/>
            <person name="Noone D."/>
            <person name="O'Reilly M."/>
            <person name="Ogawa K."/>
            <person name="Ogiwara A."/>
            <person name="Oudega B."/>
            <person name="Park S.-H."/>
            <person name="Parro V."/>
            <person name="Pohl T.M."/>
            <person name="Portetelle D."/>
            <person name="Porwollik S."/>
            <person name="Prescott A.M."/>
            <person name="Presecan E."/>
            <person name="Pujic P."/>
            <person name="Purnelle B."/>
            <person name="Rapoport G."/>
            <person name="Rey M."/>
            <person name="Reynolds S."/>
            <person name="Rieger M."/>
            <person name="Rivolta C."/>
            <person name="Rocha E."/>
            <person name="Roche B."/>
            <person name="Rose M."/>
            <person name="Sadaie Y."/>
            <person name="Sato T."/>
            <person name="Scanlan E."/>
            <person name="Schleich S."/>
            <person name="Schroeter R."/>
            <person name="Scoffone F."/>
            <person name="Sekiguchi J."/>
            <person name="Sekowska A."/>
            <person name="Seror S.J."/>
            <person name="Serror P."/>
            <person name="Shin B.-S."/>
            <person name="Soldo B."/>
            <person name="Sorokin A."/>
            <person name="Tacconi E."/>
            <person name="Takagi T."/>
            <person name="Takahashi H."/>
            <person name="Takemaru K."/>
            <person name="Takeuchi M."/>
            <person name="Tamakoshi A."/>
            <person name="Tanaka T."/>
            <person name="Terpstra P."/>
            <person name="Tognoni A."/>
            <person name="Tosato V."/>
            <person name="Uchiyama S."/>
            <person name="Vandenbol M."/>
            <person name="Vannier F."/>
            <person name="Vassarotti A."/>
            <person name="Viari A."/>
            <person name="Wambutt R."/>
            <person name="Wedler E."/>
            <person name="Wedler H."/>
            <person name="Weitzenegger T."/>
            <person name="Winters P."/>
            <person name="Wipat A."/>
            <person name="Yamamoto H."/>
            <person name="Yamane K."/>
            <person name="Yasumoto K."/>
            <person name="Yata K."/>
            <person name="Yoshida K."/>
            <person name="Yoshikawa H.-F."/>
            <person name="Zumstein E."/>
            <person name="Yoshikawa H."/>
            <person name="Danchin A."/>
        </authorList>
    </citation>
    <scope>NUCLEOTIDE SEQUENCE [LARGE SCALE GENOMIC DNA]</scope>
    <source>
        <strain>168</strain>
    </source>
</reference>
<reference key="2">
    <citation type="journal article" date="2009" name="Microbiology">
        <title>From a consortium sequence to a unified sequence: the Bacillus subtilis 168 reference genome a decade later.</title>
        <authorList>
            <person name="Barbe V."/>
            <person name="Cruveiller S."/>
            <person name="Kunst F."/>
            <person name="Lenoble P."/>
            <person name="Meurice G."/>
            <person name="Sekowska A."/>
            <person name="Vallenet D."/>
            <person name="Wang T."/>
            <person name="Moszer I."/>
            <person name="Medigue C."/>
            <person name="Danchin A."/>
        </authorList>
    </citation>
    <scope>SEQUENCE REVISION</scope>
</reference>
<feature type="chain" id="PRO_0000382689" description="Uncharacterized HTH-type transcriptional regulator YvaP">
    <location>
        <begin position="1"/>
        <end position="108"/>
    </location>
</feature>
<feature type="domain" description="HTH hxlR-type" evidence="1">
    <location>
        <begin position="7"/>
        <end position="106"/>
    </location>
</feature>
<sequence>MNQSEMCPRFEKAVDILSKRWVALIVFQLLNGSQRFSEIEAALPNLSGRVLSERLKELELEGVVKRDVIPETPVRIEYSLTDKGKALAPILGEISKWATEWIDPSFLD</sequence>
<protein>
    <recommendedName>
        <fullName>Uncharacterized HTH-type transcriptional regulator YvaP</fullName>
    </recommendedName>
</protein>